<accession>O13733</accession>
<organism>
    <name type="scientific">Schizosaccharomyces pombe (strain 972 / ATCC 24843)</name>
    <name type="common">Fission yeast</name>
    <dbReference type="NCBI Taxonomy" id="284812"/>
    <lineage>
        <taxon>Eukaryota</taxon>
        <taxon>Fungi</taxon>
        <taxon>Dikarya</taxon>
        <taxon>Ascomycota</taxon>
        <taxon>Taphrinomycotina</taxon>
        <taxon>Schizosaccharomycetes</taxon>
        <taxon>Schizosaccharomycetales</taxon>
        <taxon>Schizosaccharomycetaceae</taxon>
        <taxon>Schizosaccharomyces</taxon>
    </lineage>
</organism>
<name>PPK3_SCHPO</name>
<dbReference type="EMBL" id="CU329670">
    <property type="protein sequence ID" value="CAB10110.1"/>
    <property type="molecule type" value="Genomic_DNA"/>
</dbReference>
<dbReference type="PIR" id="T37713">
    <property type="entry name" value="T37713"/>
</dbReference>
<dbReference type="RefSeq" id="NP_594300.1">
    <property type="nucleotide sequence ID" value="NM_001019723.2"/>
</dbReference>
<dbReference type="SMR" id="O13733"/>
<dbReference type="BioGRID" id="279191">
    <property type="interactions" value="1"/>
</dbReference>
<dbReference type="FunCoup" id="O13733">
    <property type="interactions" value="1098"/>
</dbReference>
<dbReference type="STRING" id="284812.O13733"/>
<dbReference type="iPTMnet" id="O13733"/>
<dbReference type="PaxDb" id="4896-SPAC15A10.13.1"/>
<dbReference type="EnsemblFungi" id="SPAC15A10.13.1">
    <property type="protein sequence ID" value="SPAC15A10.13.1:pep"/>
    <property type="gene ID" value="SPAC15A10.13"/>
</dbReference>
<dbReference type="GeneID" id="2542741"/>
<dbReference type="KEGG" id="spo:2542741"/>
<dbReference type="PomBase" id="SPAC15A10.13">
    <property type="gene designation" value="ppk3"/>
</dbReference>
<dbReference type="VEuPathDB" id="FungiDB:SPAC15A10.13"/>
<dbReference type="eggNOG" id="KOG1243">
    <property type="taxonomic scope" value="Eukaryota"/>
</dbReference>
<dbReference type="HOGENOM" id="CLU_010392_1_0_1"/>
<dbReference type="InParanoid" id="O13733"/>
<dbReference type="OMA" id="NDTSWAG"/>
<dbReference type="PhylomeDB" id="O13733"/>
<dbReference type="PRO" id="PR:O13733"/>
<dbReference type="Proteomes" id="UP000002485">
    <property type="component" value="Chromosome I"/>
</dbReference>
<dbReference type="GO" id="GO:0005737">
    <property type="term" value="C:cytoplasm"/>
    <property type="evidence" value="ECO:0007005"/>
    <property type="project" value="PomBase"/>
</dbReference>
<dbReference type="GO" id="GO:0005794">
    <property type="term" value="C:Golgi apparatus"/>
    <property type="evidence" value="ECO:0007005"/>
    <property type="project" value="PomBase"/>
</dbReference>
<dbReference type="GO" id="GO:0005524">
    <property type="term" value="F:ATP binding"/>
    <property type="evidence" value="ECO:0007669"/>
    <property type="project" value="InterPro"/>
</dbReference>
<dbReference type="GO" id="GO:0004672">
    <property type="term" value="F:protein kinase activity"/>
    <property type="evidence" value="ECO:0007669"/>
    <property type="project" value="InterPro"/>
</dbReference>
<dbReference type="GO" id="GO:0006409">
    <property type="term" value="P:tRNA export from nucleus"/>
    <property type="evidence" value="ECO:0000318"/>
    <property type="project" value="GO_Central"/>
</dbReference>
<dbReference type="CDD" id="cd14011">
    <property type="entry name" value="PK_SCY1_like"/>
    <property type="match status" value="1"/>
</dbReference>
<dbReference type="Gene3D" id="1.25.10.10">
    <property type="entry name" value="Leucine-rich Repeat Variant"/>
    <property type="match status" value="1"/>
</dbReference>
<dbReference type="Gene3D" id="3.30.200.20">
    <property type="entry name" value="Phosphorylase Kinase, domain 1"/>
    <property type="match status" value="1"/>
</dbReference>
<dbReference type="Gene3D" id="1.10.510.10">
    <property type="entry name" value="Transferase(Phosphotransferase) domain 1"/>
    <property type="match status" value="1"/>
</dbReference>
<dbReference type="InterPro" id="IPR011989">
    <property type="entry name" value="ARM-like"/>
</dbReference>
<dbReference type="InterPro" id="IPR016024">
    <property type="entry name" value="ARM-type_fold"/>
</dbReference>
<dbReference type="InterPro" id="IPR051177">
    <property type="entry name" value="CIK-Related_Protein"/>
</dbReference>
<dbReference type="InterPro" id="IPR011009">
    <property type="entry name" value="Kinase-like_dom_sf"/>
</dbReference>
<dbReference type="InterPro" id="IPR000719">
    <property type="entry name" value="Prot_kinase_dom"/>
</dbReference>
<dbReference type="InterPro" id="IPR001245">
    <property type="entry name" value="Ser-Thr/Tyr_kinase_cat_dom"/>
</dbReference>
<dbReference type="PANTHER" id="PTHR12984:SF3">
    <property type="entry name" value="N-TERMINAL KINASE-LIKE PROTEIN"/>
    <property type="match status" value="1"/>
</dbReference>
<dbReference type="PANTHER" id="PTHR12984">
    <property type="entry name" value="SCY1-RELATED S/T PROTEIN KINASE-LIKE"/>
    <property type="match status" value="1"/>
</dbReference>
<dbReference type="Pfam" id="PF07714">
    <property type="entry name" value="PK_Tyr_Ser-Thr"/>
    <property type="match status" value="1"/>
</dbReference>
<dbReference type="SUPFAM" id="SSF48371">
    <property type="entry name" value="ARM repeat"/>
    <property type="match status" value="1"/>
</dbReference>
<dbReference type="SUPFAM" id="SSF56112">
    <property type="entry name" value="Protein kinase-like (PK-like)"/>
    <property type="match status" value="1"/>
</dbReference>
<dbReference type="PROSITE" id="PS50011">
    <property type="entry name" value="PROTEIN_KINASE_DOM"/>
    <property type="match status" value="1"/>
</dbReference>
<protein>
    <recommendedName>
        <fullName>Protein kinase domain-containing protein ppk3</fullName>
    </recommendedName>
</protein>
<sequence>MDFIKSAASFIAKAGSQFPYDLNEKIPLSSNSVWTLQTGSIRESAQPCSVFSISLSTHPEWAELADRACETMKTLRHPCIIKYLSTYKSSTHLYIATETVRPVTTELNELSAEIKTYGLWRVSAALSFLNDKNIVHGNLQMSSVYLNSADEWIIGDFFLAGDSPQFIKDNHDKILNWSRLVPFEIQSSTLNSASFIYLDSYELGKFISHLYNGTPGDLSQRGNIPANIFVSAKKLLNVEGKQKLLASEFLKLGERPGGFFRTHLITLYELLSEVRINEEEDRVKLKQLLSSKLEVIPKNYIQKVVLNILFLLLSIDTHSDVVELLFKCAQIVKGRPDIEKDFGVPLLSLLKQQSVPIRGLLLSGIINNPDVLPKNIYEDTSFSVFANLVRSNSPTLKEHAIVVFSIIAPKLSKKTLNNELLRSLAVVQNDQHPTLRTNSTICLGKIAEYLDASVRKPVLAAALSRSLKDPFVPAREAALKVLLSVQNYFDTKDVAIKLFPSVVPLLIDENEGIRRTAEDVTDQFLSRIKNFNLGEKENVSAPAKFNGSFWSKFIHSSSASPSPSIDMKKESLELKNDTTEIKEKKNSKSRVVGNTENSKDEFNNPLFETEEQIDESWMENWNDEEETENNVEESWGL</sequence>
<proteinExistence type="predicted"/>
<gene>
    <name type="primary">ppk3</name>
    <name type="ORF">SPAC15A10.13</name>
</gene>
<evidence type="ECO:0000255" key="1">
    <source>
        <dbReference type="PROSITE-ProRule" id="PRU00159"/>
    </source>
</evidence>
<evidence type="ECO:0000256" key="2">
    <source>
        <dbReference type="SAM" id="MobiDB-lite"/>
    </source>
</evidence>
<evidence type="ECO:0000269" key="3">
    <source>
    </source>
</evidence>
<reference key="1">
    <citation type="journal article" date="2002" name="Nature">
        <title>The genome sequence of Schizosaccharomyces pombe.</title>
        <authorList>
            <person name="Wood V."/>
            <person name="Gwilliam R."/>
            <person name="Rajandream M.A."/>
            <person name="Lyne M.H."/>
            <person name="Lyne R."/>
            <person name="Stewart A."/>
            <person name="Sgouros J.G."/>
            <person name="Peat N."/>
            <person name="Hayles J."/>
            <person name="Baker S.G."/>
            <person name="Basham D."/>
            <person name="Bowman S."/>
            <person name="Brooks K."/>
            <person name="Brown D."/>
            <person name="Brown S."/>
            <person name="Chillingworth T."/>
            <person name="Churcher C.M."/>
            <person name="Collins M."/>
            <person name="Connor R."/>
            <person name="Cronin A."/>
            <person name="Davis P."/>
            <person name="Feltwell T."/>
            <person name="Fraser A."/>
            <person name="Gentles S."/>
            <person name="Goble A."/>
            <person name="Hamlin N."/>
            <person name="Harris D.E."/>
            <person name="Hidalgo J."/>
            <person name="Hodgson G."/>
            <person name="Holroyd S."/>
            <person name="Hornsby T."/>
            <person name="Howarth S."/>
            <person name="Huckle E.J."/>
            <person name="Hunt S."/>
            <person name="Jagels K."/>
            <person name="James K.D."/>
            <person name="Jones L."/>
            <person name="Jones M."/>
            <person name="Leather S."/>
            <person name="McDonald S."/>
            <person name="McLean J."/>
            <person name="Mooney P."/>
            <person name="Moule S."/>
            <person name="Mungall K.L."/>
            <person name="Murphy L.D."/>
            <person name="Niblett D."/>
            <person name="Odell C."/>
            <person name="Oliver K."/>
            <person name="O'Neil S."/>
            <person name="Pearson D."/>
            <person name="Quail M.A."/>
            <person name="Rabbinowitsch E."/>
            <person name="Rutherford K.M."/>
            <person name="Rutter S."/>
            <person name="Saunders D."/>
            <person name="Seeger K."/>
            <person name="Sharp S."/>
            <person name="Skelton J."/>
            <person name="Simmonds M.N."/>
            <person name="Squares R."/>
            <person name="Squares S."/>
            <person name="Stevens K."/>
            <person name="Taylor K."/>
            <person name="Taylor R.G."/>
            <person name="Tivey A."/>
            <person name="Walsh S.V."/>
            <person name="Warren T."/>
            <person name="Whitehead S."/>
            <person name="Woodward J.R."/>
            <person name="Volckaert G."/>
            <person name="Aert R."/>
            <person name="Robben J."/>
            <person name="Grymonprez B."/>
            <person name="Weltjens I."/>
            <person name="Vanstreels E."/>
            <person name="Rieger M."/>
            <person name="Schaefer M."/>
            <person name="Mueller-Auer S."/>
            <person name="Gabel C."/>
            <person name="Fuchs M."/>
            <person name="Duesterhoeft A."/>
            <person name="Fritzc C."/>
            <person name="Holzer E."/>
            <person name="Moestl D."/>
            <person name="Hilbert H."/>
            <person name="Borzym K."/>
            <person name="Langer I."/>
            <person name="Beck A."/>
            <person name="Lehrach H."/>
            <person name="Reinhardt R."/>
            <person name="Pohl T.M."/>
            <person name="Eger P."/>
            <person name="Zimmermann W."/>
            <person name="Wedler H."/>
            <person name="Wambutt R."/>
            <person name="Purnelle B."/>
            <person name="Goffeau A."/>
            <person name="Cadieu E."/>
            <person name="Dreano S."/>
            <person name="Gloux S."/>
            <person name="Lelaure V."/>
            <person name="Mottier S."/>
            <person name="Galibert F."/>
            <person name="Aves S.J."/>
            <person name="Xiang Z."/>
            <person name="Hunt C."/>
            <person name="Moore K."/>
            <person name="Hurst S.M."/>
            <person name="Lucas M."/>
            <person name="Rochet M."/>
            <person name="Gaillardin C."/>
            <person name="Tallada V.A."/>
            <person name="Garzon A."/>
            <person name="Thode G."/>
            <person name="Daga R.R."/>
            <person name="Cruzado L."/>
            <person name="Jimenez J."/>
            <person name="Sanchez M."/>
            <person name="del Rey F."/>
            <person name="Benito J."/>
            <person name="Dominguez A."/>
            <person name="Revuelta J.L."/>
            <person name="Moreno S."/>
            <person name="Armstrong J."/>
            <person name="Forsburg S.L."/>
            <person name="Cerutti L."/>
            <person name="Lowe T."/>
            <person name="McCombie W.R."/>
            <person name="Paulsen I."/>
            <person name="Potashkin J."/>
            <person name="Shpakovski G.V."/>
            <person name="Ussery D."/>
            <person name="Barrell B.G."/>
            <person name="Nurse P."/>
        </authorList>
    </citation>
    <scope>NUCLEOTIDE SEQUENCE [LARGE SCALE GENOMIC DNA]</scope>
    <source>
        <strain>972 / ATCC 24843</strain>
    </source>
</reference>
<reference key="2">
    <citation type="journal article" date="2005" name="Eukaryot. Cell">
        <title>Systematic deletion analysis of fission yeast protein kinases.</title>
        <authorList>
            <person name="Bimbo A."/>
            <person name="Jia Y."/>
            <person name="Poh S.L."/>
            <person name="Karuturi R.K.M."/>
            <person name="den Elzen N."/>
            <person name="Peng X."/>
            <person name="Zheng L."/>
            <person name="O'Connell M."/>
            <person name="Liu E.T."/>
            <person name="Balasubramanian M.K."/>
            <person name="Liu J."/>
        </authorList>
    </citation>
    <scope>IDENTIFICATION</scope>
</reference>
<reference key="3">
    <citation type="journal article" date="2006" name="Nat. Biotechnol.">
        <title>ORFeome cloning and global analysis of protein localization in the fission yeast Schizosaccharomyces pombe.</title>
        <authorList>
            <person name="Matsuyama A."/>
            <person name="Arai R."/>
            <person name="Yashiroda Y."/>
            <person name="Shirai A."/>
            <person name="Kamata A."/>
            <person name="Sekido S."/>
            <person name="Kobayashi Y."/>
            <person name="Hashimoto A."/>
            <person name="Hamamoto M."/>
            <person name="Hiraoka Y."/>
            <person name="Horinouchi S."/>
            <person name="Yoshida M."/>
        </authorList>
    </citation>
    <scope>SUBCELLULAR LOCATION [LARGE SCALE ANALYSIS]</scope>
</reference>
<comment type="subcellular location">
    <subcellularLocation>
        <location evidence="3">Golgi apparatus</location>
    </subcellularLocation>
</comment>
<comment type="domain">
    <text>The protein kinase domain is predicted to be catalytically inactive.</text>
</comment>
<keyword id="KW-0333">Golgi apparatus</keyword>
<keyword id="KW-1185">Reference proteome</keyword>
<feature type="chain" id="PRO_0000116647" description="Protein kinase domain-containing protein ppk3">
    <location>
        <begin position="1"/>
        <end position="637"/>
    </location>
</feature>
<feature type="domain" description="Protein kinase" evidence="1">
    <location>
        <begin position="1"/>
        <end position="296"/>
    </location>
</feature>
<feature type="repeat" description="HEAT">
    <location>
        <begin position="414"/>
        <end position="450"/>
    </location>
</feature>
<feature type="region of interest" description="Disordered" evidence="2">
    <location>
        <begin position="576"/>
        <end position="637"/>
    </location>
</feature>
<feature type="compositionally biased region" description="Basic and acidic residues" evidence="2">
    <location>
        <begin position="576"/>
        <end position="586"/>
    </location>
</feature>
<feature type="compositionally biased region" description="Acidic residues" evidence="2">
    <location>
        <begin position="608"/>
        <end position="631"/>
    </location>
</feature>